<comment type="function">
    <text evidence="1">Produces no obvious effect on ionic currents when tested on the mouse dorsal rooted ganglia (DRG).</text>
</comment>
<comment type="subcellular location">
    <subcellularLocation>
        <location evidence="1">Secreted</location>
    </subcellularLocation>
</comment>
<comment type="tissue specificity">
    <text>Expressed by the venom duct.</text>
</comment>
<comment type="domain">
    <text evidence="1">The presence of a 'disulfide through disulfide knot' structurally defines this protein as a knottin.</text>
</comment>
<comment type="domain">
    <text>The cysteine framework is VI/VII (C-C-CC-C-C).</text>
</comment>
<comment type="similarity">
    <text evidence="3">Belongs to the conotoxin O1 superfamily.</text>
</comment>
<reference key="1">
    <citation type="journal article" date="2006" name="Peptides">
        <title>Sequence diversity of O-superfamily conopeptides from Conus marmoreus native to Hainan.</title>
        <authorList>
            <person name="Luo S."/>
            <person name="Zhangsun D."/>
            <person name="Lin Q."/>
            <person name="Xie L."/>
            <person name="Wu Y."/>
            <person name="Zhu X."/>
        </authorList>
    </citation>
    <scope>NUCLEOTIDE SEQUENCE [MRNA]</scope>
    <source>
        <tissue>Venom duct</tissue>
    </source>
</reference>
<name>O164_CONMR</name>
<proteinExistence type="evidence at transcript level"/>
<keyword id="KW-0165">Cleavage on pair of basic residues</keyword>
<keyword id="KW-1015">Disulfide bond</keyword>
<keyword id="KW-0960">Knottin</keyword>
<keyword id="KW-0528">Neurotoxin</keyword>
<keyword id="KW-0964">Secreted</keyword>
<keyword id="KW-0732">Signal</keyword>
<keyword id="KW-0800">Toxin</keyword>
<protein>
    <recommendedName>
        <fullName>Conotoxin MaIr94</fullName>
    </recommendedName>
</protein>
<sequence>MKLTCVLIITVLFLTACQLTAAGNSRDKQEDPVVRSSGEVQRSEDIKLAKRCLESGSLCFAGYGHSSCCSGACLDYGGLGVGACR</sequence>
<dbReference type="EMBL" id="DQ141172">
    <property type="protein sequence ID" value="AAZ83771.1"/>
    <property type="molecule type" value="mRNA"/>
</dbReference>
<dbReference type="SMR" id="Q3YEE1"/>
<dbReference type="ConoServer" id="1126">
    <property type="toxin name" value="MaIr94 precursor"/>
</dbReference>
<dbReference type="GO" id="GO:0005576">
    <property type="term" value="C:extracellular region"/>
    <property type="evidence" value="ECO:0007669"/>
    <property type="project" value="UniProtKB-SubCell"/>
</dbReference>
<dbReference type="GO" id="GO:0008200">
    <property type="term" value="F:ion channel inhibitor activity"/>
    <property type="evidence" value="ECO:0007669"/>
    <property type="project" value="InterPro"/>
</dbReference>
<dbReference type="GO" id="GO:0090729">
    <property type="term" value="F:toxin activity"/>
    <property type="evidence" value="ECO:0007669"/>
    <property type="project" value="UniProtKB-KW"/>
</dbReference>
<dbReference type="InterPro" id="IPR004214">
    <property type="entry name" value="Conotoxin"/>
</dbReference>
<dbReference type="Pfam" id="PF02950">
    <property type="entry name" value="Conotoxin"/>
    <property type="match status" value="1"/>
</dbReference>
<evidence type="ECO:0000250" key="1"/>
<evidence type="ECO:0000255" key="2"/>
<evidence type="ECO:0000305" key="3"/>
<feature type="signal peptide" evidence="2">
    <location>
        <begin position="1"/>
        <end position="22"/>
    </location>
</feature>
<feature type="propeptide" id="PRO_0000315516" evidence="3">
    <location>
        <begin position="23"/>
        <end position="49"/>
    </location>
</feature>
<feature type="peptide" id="PRO_0000315517" description="Conotoxin MaIr94">
    <location>
        <begin position="52"/>
        <end position="85"/>
    </location>
</feature>
<feature type="disulfide bond" evidence="1">
    <location>
        <begin position="52"/>
        <end position="69"/>
    </location>
</feature>
<feature type="disulfide bond" evidence="1">
    <location>
        <begin position="59"/>
        <end position="73"/>
    </location>
</feature>
<feature type="disulfide bond" evidence="1">
    <location>
        <begin position="68"/>
        <end position="84"/>
    </location>
</feature>
<accession>Q3YEE1</accession>
<organism>
    <name type="scientific">Conus marmoreus</name>
    <name type="common">Marble cone</name>
    <dbReference type="NCBI Taxonomy" id="42752"/>
    <lineage>
        <taxon>Eukaryota</taxon>
        <taxon>Metazoa</taxon>
        <taxon>Spiralia</taxon>
        <taxon>Lophotrochozoa</taxon>
        <taxon>Mollusca</taxon>
        <taxon>Gastropoda</taxon>
        <taxon>Caenogastropoda</taxon>
        <taxon>Neogastropoda</taxon>
        <taxon>Conoidea</taxon>
        <taxon>Conidae</taxon>
        <taxon>Conus</taxon>
    </lineage>
</organism>